<keyword id="KW-0067">ATP-binding</keyword>
<keyword id="KW-0997">Cell inner membrane</keyword>
<keyword id="KW-1003">Cell membrane</keyword>
<keyword id="KW-0472">Membrane</keyword>
<keyword id="KW-0547">Nucleotide-binding</keyword>
<keyword id="KW-0762">Sugar transport</keyword>
<keyword id="KW-1278">Translocase</keyword>
<keyword id="KW-0812">Transmembrane</keyword>
<keyword id="KW-1133">Transmembrane helix</keyword>
<keyword id="KW-0813">Transport</keyword>
<name>NDVA_RHOPA</name>
<comment type="function">
    <text evidence="1">Involved in beta-(1--&gt;2)glucan export. Transmembrane domains (TMD) form a pore in the inner membrane and the ATP-binding domain (NBD) is responsible for energy generation (By similarity).</text>
</comment>
<comment type="catalytic activity">
    <reaction evidence="2">
        <text>[(1-&gt;2)-beta-D-glucosyl](n)(in) + ATP + H2O = [(1-&gt;2)-beta-D-glucosyl](n)(out) + ADP + phosphate + H(+)</text>
        <dbReference type="Rhea" id="RHEA:18453"/>
        <dbReference type="Rhea" id="RHEA-COMP:11881"/>
        <dbReference type="ChEBI" id="CHEBI:15377"/>
        <dbReference type="ChEBI" id="CHEBI:15378"/>
        <dbReference type="ChEBI" id="CHEBI:27517"/>
        <dbReference type="ChEBI" id="CHEBI:30616"/>
        <dbReference type="ChEBI" id="CHEBI:43474"/>
        <dbReference type="ChEBI" id="CHEBI:456216"/>
        <dbReference type="EC" id="7.5.2.3"/>
    </reaction>
</comment>
<comment type="subunit">
    <text evidence="2">Homodimer.</text>
</comment>
<comment type="subcellular location">
    <subcellularLocation>
        <location evidence="2">Cell inner membrane</location>
        <topology evidence="2">Multi-pass membrane protein</topology>
    </subcellularLocation>
</comment>
<comment type="domain">
    <text>In NdvA the ATP-binding domain (NBD) and the transmembrane domain (TMD) are fused.</text>
</comment>
<comment type="similarity">
    <text evidence="2">Belongs to the ABC transporter superfamily. Beta-(1--&gt;2)glucan exporter (TC 3.A.1.108.1) family.</text>
</comment>
<accession>Q6N1Y7</accession>
<sequence>MSLFHLYTRVLQLLGKEARLGWILAVANLLLATAQFAEPILFGRIVDVMSGNLATGALVPETRSPWPLLGAWVGFGLFTIMCSALVALQADRLAHRRRQAVLTSYFEHILQLPISFHTGTHSGRLMKVMLQGTDALWRMWLGFFREHFAAILSLVVLLPLSLYINWRLAILLFVLCIVFTVLTTLVVHKTYGMQGEVEAQYSDLSARASDALGNVALVQSFVRVDAEVQGLRNVSGRLLEAQMPVLSWWALVTVITRASTTITVLSIFALGIYLNQQGLTSVGEIVMFVSFATLLIQRLEQVVNFINNVLMEAPRLREFIAVLDTVPAVRDRADAIDCGRLSGLVEFQNVSFSYDGKRPAIEDLSFTALPGDTIALVGATGAGKSTAIALLHRAFDPQSGVIKVDGMDIRGITLASLRRNIGVVFQEALLFDRSIADNLRVGKPDATPEELRLAAERAQALEFIERSDHKFDTNAGERGRMLSGGERQRLSIARALLKDPPILILDEATSALDAVTEAKLNLALDEVMKGRTTFVIAHRLSTIRDATRILVFDNGKVIESGTFDELVARGGAFAQLARAQFMVQESARSAMSSAADAQL</sequence>
<reference key="1">
    <citation type="journal article" date="2004" name="Nat. Biotechnol.">
        <title>Complete genome sequence of the metabolically versatile photosynthetic bacterium Rhodopseudomonas palustris.</title>
        <authorList>
            <person name="Larimer F.W."/>
            <person name="Chain P."/>
            <person name="Hauser L."/>
            <person name="Lamerdin J.E."/>
            <person name="Malfatti S."/>
            <person name="Do L."/>
            <person name="Land M.L."/>
            <person name="Pelletier D.A."/>
            <person name="Beatty J.T."/>
            <person name="Lang A.S."/>
            <person name="Tabita F.R."/>
            <person name="Gibson J.L."/>
            <person name="Hanson T.E."/>
            <person name="Bobst C."/>
            <person name="Torres y Torres J.L."/>
            <person name="Peres C."/>
            <person name="Harrison F.H."/>
            <person name="Gibson J."/>
            <person name="Harwood C.S."/>
        </authorList>
    </citation>
    <scope>NUCLEOTIDE SEQUENCE [LARGE SCALE GENOMIC DNA]</scope>
    <source>
        <strain>ATCC BAA-98 / CGA009</strain>
    </source>
</reference>
<evidence type="ECO:0000250" key="1"/>
<evidence type="ECO:0000255" key="2">
    <source>
        <dbReference type="HAMAP-Rule" id="MF_01728"/>
    </source>
</evidence>
<proteinExistence type="inferred from homology"/>
<organism>
    <name type="scientific">Rhodopseudomonas palustris (strain ATCC BAA-98 / CGA009)</name>
    <dbReference type="NCBI Taxonomy" id="258594"/>
    <lineage>
        <taxon>Bacteria</taxon>
        <taxon>Pseudomonadati</taxon>
        <taxon>Pseudomonadota</taxon>
        <taxon>Alphaproteobacteria</taxon>
        <taxon>Hyphomicrobiales</taxon>
        <taxon>Nitrobacteraceae</taxon>
        <taxon>Rhodopseudomonas</taxon>
    </lineage>
</organism>
<dbReference type="EC" id="7.5.2.3" evidence="2"/>
<dbReference type="EMBL" id="BX572606">
    <property type="protein sequence ID" value="CAE29706.1"/>
    <property type="molecule type" value="Genomic_DNA"/>
</dbReference>
<dbReference type="RefSeq" id="WP_011159800.1">
    <property type="nucleotide sequence ID" value="NZ_CP116810.1"/>
</dbReference>
<dbReference type="SMR" id="Q6N1Y7"/>
<dbReference type="STRING" id="258594.RPA4265"/>
<dbReference type="GeneID" id="66895391"/>
<dbReference type="eggNOG" id="COG1132">
    <property type="taxonomic scope" value="Bacteria"/>
</dbReference>
<dbReference type="HOGENOM" id="CLU_000604_84_8_5"/>
<dbReference type="PhylomeDB" id="Q6N1Y7"/>
<dbReference type="GO" id="GO:0005886">
    <property type="term" value="C:plasma membrane"/>
    <property type="evidence" value="ECO:0007669"/>
    <property type="project" value="UniProtKB-SubCell"/>
</dbReference>
<dbReference type="GO" id="GO:0015441">
    <property type="term" value="F:ABC-type beta-glucan transporter activity"/>
    <property type="evidence" value="ECO:0007669"/>
    <property type="project" value="UniProtKB-EC"/>
</dbReference>
<dbReference type="GO" id="GO:0015421">
    <property type="term" value="F:ABC-type oligopeptide transporter activity"/>
    <property type="evidence" value="ECO:0007669"/>
    <property type="project" value="TreeGrafter"/>
</dbReference>
<dbReference type="GO" id="GO:0005524">
    <property type="term" value="F:ATP binding"/>
    <property type="evidence" value="ECO:0007669"/>
    <property type="project" value="UniProtKB-KW"/>
</dbReference>
<dbReference type="GO" id="GO:0016887">
    <property type="term" value="F:ATP hydrolysis activity"/>
    <property type="evidence" value="ECO:0007669"/>
    <property type="project" value="InterPro"/>
</dbReference>
<dbReference type="CDD" id="cd18562">
    <property type="entry name" value="ABC_6TM_NdvA_beta-glucan_exporter_like"/>
    <property type="match status" value="1"/>
</dbReference>
<dbReference type="FunFam" id="3.40.50.300:FF:000221">
    <property type="entry name" value="Multidrug ABC transporter ATP-binding protein"/>
    <property type="match status" value="1"/>
</dbReference>
<dbReference type="Gene3D" id="1.20.1560.10">
    <property type="entry name" value="ABC transporter type 1, transmembrane domain"/>
    <property type="match status" value="1"/>
</dbReference>
<dbReference type="Gene3D" id="3.40.50.300">
    <property type="entry name" value="P-loop containing nucleotide triphosphate hydrolases"/>
    <property type="match status" value="1"/>
</dbReference>
<dbReference type="InterPro" id="IPR003593">
    <property type="entry name" value="AAA+_ATPase"/>
</dbReference>
<dbReference type="InterPro" id="IPR011527">
    <property type="entry name" value="ABC1_TM_dom"/>
</dbReference>
<dbReference type="InterPro" id="IPR036640">
    <property type="entry name" value="ABC1_TM_sf"/>
</dbReference>
<dbReference type="InterPro" id="IPR003439">
    <property type="entry name" value="ABC_transporter-like_ATP-bd"/>
</dbReference>
<dbReference type="InterPro" id="IPR017871">
    <property type="entry name" value="ABC_transporter-like_CS"/>
</dbReference>
<dbReference type="InterPro" id="IPR027417">
    <property type="entry name" value="P-loop_NTPase"/>
</dbReference>
<dbReference type="InterPro" id="IPR039421">
    <property type="entry name" value="Type_1_exporter"/>
</dbReference>
<dbReference type="NCBIfam" id="NF010178">
    <property type="entry name" value="PRK13657.1"/>
    <property type="match status" value="1"/>
</dbReference>
<dbReference type="PANTHER" id="PTHR43394:SF1">
    <property type="entry name" value="ATP-BINDING CASSETTE SUB-FAMILY B MEMBER 10, MITOCHONDRIAL"/>
    <property type="match status" value="1"/>
</dbReference>
<dbReference type="PANTHER" id="PTHR43394">
    <property type="entry name" value="ATP-DEPENDENT PERMEASE MDL1, MITOCHONDRIAL"/>
    <property type="match status" value="1"/>
</dbReference>
<dbReference type="Pfam" id="PF00664">
    <property type="entry name" value="ABC_membrane"/>
    <property type="match status" value="1"/>
</dbReference>
<dbReference type="Pfam" id="PF00005">
    <property type="entry name" value="ABC_tran"/>
    <property type="match status" value="1"/>
</dbReference>
<dbReference type="SMART" id="SM00382">
    <property type="entry name" value="AAA"/>
    <property type="match status" value="1"/>
</dbReference>
<dbReference type="SUPFAM" id="SSF90123">
    <property type="entry name" value="ABC transporter transmembrane region"/>
    <property type="match status" value="1"/>
</dbReference>
<dbReference type="SUPFAM" id="SSF52540">
    <property type="entry name" value="P-loop containing nucleoside triphosphate hydrolases"/>
    <property type="match status" value="1"/>
</dbReference>
<dbReference type="PROSITE" id="PS50929">
    <property type="entry name" value="ABC_TM1F"/>
    <property type="match status" value="1"/>
</dbReference>
<dbReference type="PROSITE" id="PS00211">
    <property type="entry name" value="ABC_TRANSPORTER_1"/>
    <property type="match status" value="1"/>
</dbReference>
<dbReference type="PROSITE" id="PS50893">
    <property type="entry name" value="ABC_TRANSPORTER_2"/>
    <property type="match status" value="1"/>
</dbReference>
<dbReference type="PROSITE" id="PS51317">
    <property type="entry name" value="NDVA"/>
    <property type="match status" value="1"/>
</dbReference>
<protein>
    <recommendedName>
        <fullName evidence="2">Beta-(1--&gt;2)glucan export ATP-binding/permease protein NdvA</fullName>
        <ecNumber evidence="2">7.5.2.3</ecNumber>
    </recommendedName>
</protein>
<feature type="chain" id="PRO_5000097774" description="Beta-(1--&gt;2)glucan export ATP-binding/permease protein NdvA">
    <location>
        <begin position="1"/>
        <end position="599"/>
    </location>
</feature>
<feature type="transmembrane region" description="Helical" evidence="2">
    <location>
        <begin position="22"/>
        <end position="42"/>
    </location>
</feature>
<feature type="transmembrane region" description="Helical" evidence="2">
    <location>
        <begin position="68"/>
        <end position="88"/>
    </location>
</feature>
<feature type="transmembrane region" description="Helical" evidence="2">
    <location>
        <begin position="146"/>
        <end position="166"/>
    </location>
</feature>
<feature type="transmembrane region" description="Helical" evidence="2">
    <location>
        <begin position="168"/>
        <end position="188"/>
    </location>
</feature>
<feature type="transmembrane region" description="Helical" evidence="2">
    <location>
        <begin position="254"/>
        <end position="274"/>
    </location>
</feature>
<feature type="transmembrane region" description="Helical" evidence="2">
    <location>
        <begin position="276"/>
        <end position="296"/>
    </location>
</feature>
<feature type="domain" description="ABC transmembrane type-1" evidence="2">
    <location>
        <begin position="21"/>
        <end position="311"/>
    </location>
</feature>
<feature type="domain" description="ABC transporter" evidence="2">
    <location>
        <begin position="345"/>
        <end position="579"/>
    </location>
</feature>
<feature type="binding site" evidence="2">
    <location>
        <begin position="378"/>
        <end position="385"/>
    </location>
    <ligand>
        <name>ATP</name>
        <dbReference type="ChEBI" id="CHEBI:30616"/>
    </ligand>
</feature>
<gene>
    <name evidence="2" type="primary">ndvA</name>
    <name type="ordered locus">RPA4265</name>
</gene>